<keyword id="KW-0150">Chloroplast</keyword>
<keyword id="KW-0934">Plastid</keyword>
<keyword id="KW-0687">Ribonucleoprotein</keyword>
<keyword id="KW-0689">Ribosomal protein</keyword>
<sequence>MLSPKRTKFRRHHRGRMKGISSRGNFIAFGKFALQALEPSWITSRQIEAGRRAMTRYARRGGKIWIRIFPDKPVTMRAAETRMGSGKGSPEFWVAVVKPGRILYEMSGVSESIAKSAMRIAAFKMPIKTQFLVKKDKV</sequence>
<protein>
    <recommendedName>
        <fullName evidence="1">Large ribosomal subunit protein uL16c</fullName>
    </recommendedName>
    <alternativeName>
        <fullName evidence="2">50S ribosomal protein L16, chloroplastic</fullName>
    </alternativeName>
</protein>
<evidence type="ECO:0000255" key="1">
    <source>
        <dbReference type="HAMAP-Rule" id="MF_01342"/>
    </source>
</evidence>
<evidence type="ECO:0000305" key="2"/>
<name>RK16_CHAGL</name>
<gene>
    <name evidence="1" type="primary">rpl16</name>
</gene>
<geneLocation type="chloroplast"/>
<organism>
    <name type="scientific">Chaetosphaeridium globosum</name>
    <name type="common">Charophycean green alga</name>
    <name type="synonym">Herposteiron globosum</name>
    <dbReference type="NCBI Taxonomy" id="96477"/>
    <lineage>
        <taxon>Eukaryota</taxon>
        <taxon>Viridiplantae</taxon>
        <taxon>Streptophyta</taxon>
        <taxon>Coleochaetophyceae</taxon>
        <taxon>Coleochaetales</taxon>
        <taxon>Chaetosphaeridiaceae</taxon>
        <taxon>Chaetosphaeridium</taxon>
    </lineage>
</organism>
<dbReference type="EMBL" id="AF494278">
    <property type="protein sequence ID" value="AAM96555.1"/>
    <property type="molecule type" value="Genomic_DNA"/>
</dbReference>
<dbReference type="RefSeq" id="NP_683839.1">
    <property type="nucleotide sequence ID" value="NC_004115.1"/>
</dbReference>
<dbReference type="SMR" id="Q8M9V1"/>
<dbReference type="GeneID" id="860711"/>
<dbReference type="GO" id="GO:0009507">
    <property type="term" value="C:chloroplast"/>
    <property type="evidence" value="ECO:0007669"/>
    <property type="project" value="UniProtKB-SubCell"/>
</dbReference>
<dbReference type="GO" id="GO:0005762">
    <property type="term" value="C:mitochondrial large ribosomal subunit"/>
    <property type="evidence" value="ECO:0007669"/>
    <property type="project" value="TreeGrafter"/>
</dbReference>
<dbReference type="GO" id="GO:0019843">
    <property type="term" value="F:rRNA binding"/>
    <property type="evidence" value="ECO:0007669"/>
    <property type="project" value="InterPro"/>
</dbReference>
<dbReference type="GO" id="GO:0003735">
    <property type="term" value="F:structural constituent of ribosome"/>
    <property type="evidence" value="ECO:0007669"/>
    <property type="project" value="InterPro"/>
</dbReference>
<dbReference type="GO" id="GO:0032543">
    <property type="term" value="P:mitochondrial translation"/>
    <property type="evidence" value="ECO:0007669"/>
    <property type="project" value="TreeGrafter"/>
</dbReference>
<dbReference type="CDD" id="cd01433">
    <property type="entry name" value="Ribosomal_L16_L10e"/>
    <property type="match status" value="1"/>
</dbReference>
<dbReference type="FunFam" id="3.90.1170.10:FF:000001">
    <property type="entry name" value="50S ribosomal protein L16"/>
    <property type="match status" value="1"/>
</dbReference>
<dbReference type="Gene3D" id="3.90.1170.10">
    <property type="entry name" value="Ribosomal protein L10e/L16"/>
    <property type="match status" value="1"/>
</dbReference>
<dbReference type="HAMAP" id="MF_01342">
    <property type="entry name" value="Ribosomal_uL16"/>
    <property type="match status" value="1"/>
</dbReference>
<dbReference type="InterPro" id="IPR047873">
    <property type="entry name" value="Ribosomal_uL16"/>
</dbReference>
<dbReference type="InterPro" id="IPR000114">
    <property type="entry name" value="Ribosomal_uL16_bact-type"/>
</dbReference>
<dbReference type="InterPro" id="IPR020798">
    <property type="entry name" value="Ribosomal_uL16_CS"/>
</dbReference>
<dbReference type="InterPro" id="IPR016180">
    <property type="entry name" value="Ribosomal_uL16_dom"/>
</dbReference>
<dbReference type="InterPro" id="IPR036920">
    <property type="entry name" value="Ribosomal_uL16_sf"/>
</dbReference>
<dbReference type="NCBIfam" id="TIGR01164">
    <property type="entry name" value="rplP_bact"/>
    <property type="match status" value="1"/>
</dbReference>
<dbReference type="PANTHER" id="PTHR12220">
    <property type="entry name" value="50S/60S RIBOSOMAL PROTEIN L16"/>
    <property type="match status" value="1"/>
</dbReference>
<dbReference type="PANTHER" id="PTHR12220:SF13">
    <property type="entry name" value="LARGE RIBOSOMAL SUBUNIT PROTEIN UL16M"/>
    <property type="match status" value="1"/>
</dbReference>
<dbReference type="Pfam" id="PF00252">
    <property type="entry name" value="Ribosomal_L16"/>
    <property type="match status" value="1"/>
</dbReference>
<dbReference type="PRINTS" id="PR00060">
    <property type="entry name" value="RIBOSOMALL16"/>
</dbReference>
<dbReference type="SUPFAM" id="SSF54686">
    <property type="entry name" value="Ribosomal protein L16p/L10e"/>
    <property type="match status" value="1"/>
</dbReference>
<dbReference type="PROSITE" id="PS00586">
    <property type="entry name" value="RIBOSOMAL_L16_1"/>
    <property type="match status" value="1"/>
</dbReference>
<dbReference type="PROSITE" id="PS00701">
    <property type="entry name" value="RIBOSOMAL_L16_2"/>
    <property type="match status" value="1"/>
</dbReference>
<reference key="1">
    <citation type="journal article" date="2002" name="Proc. Natl. Acad. Sci. U.S.A.">
        <title>The chloroplast and mitochondrial genome sequences of the charophyte Chaetosphaeridium globosum: insights into the timing of the events that restructured organelle DNAs within the green algal lineage that led to land plants.</title>
        <authorList>
            <person name="Turmel M."/>
            <person name="Otis C."/>
            <person name="Lemieux C."/>
        </authorList>
    </citation>
    <scope>NUCLEOTIDE SEQUENCE [LARGE SCALE GENOMIC DNA]</scope>
    <source>
        <strain>M1311</strain>
    </source>
</reference>
<proteinExistence type="inferred from homology"/>
<comment type="subunit">
    <text evidence="1">Part of the 50S ribosomal subunit.</text>
</comment>
<comment type="subcellular location">
    <subcellularLocation>
        <location>Plastid</location>
        <location>Chloroplast</location>
    </subcellularLocation>
</comment>
<comment type="similarity">
    <text evidence="1">Belongs to the universal ribosomal protein uL16 family.</text>
</comment>
<accession>Q8M9V1</accession>
<feature type="chain" id="PRO_0000062272" description="Large ribosomal subunit protein uL16c">
    <location>
        <begin position="1"/>
        <end position="138"/>
    </location>
</feature>